<dbReference type="EC" id="1.14.14.154"/>
<dbReference type="EMBL" id="L40389">
    <property type="protein sequence ID" value="AAB02329.1"/>
    <property type="molecule type" value="Genomic_DNA"/>
</dbReference>
<dbReference type="EMBL" id="CR380951">
    <property type="protein sequence ID" value="CAG58795.1"/>
    <property type="molecule type" value="Genomic_DNA"/>
</dbReference>
<dbReference type="EMBL" id="S75389">
    <property type="protein sequence ID" value="AAB32679.1"/>
    <property type="molecule type" value="Genomic_DNA"/>
</dbReference>
<dbReference type="RefSeq" id="XP_445876.1">
    <property type="nucleotide sequence ID" value="XM_445876.1"/>
</dbReference>
<dbReference type="PDB" id="5JLC">
    <property type="method" value="X-ray"/>
    <property type="resolution" value="2.40 A"/>
    <property type="chains" value="A=20-533"/>
</dbReference>
<dbReference type="PDBsum" id="5JLC"/>
<dbReference type="SMR" id="P50859"/>
<dbReference type="FunCoup" id="P50859">
    <property type="interactions" value="617"/>
</dbReference>
<dbReference type="STRING" id="284593.P50859"/>
<dbReference type="DrugBank" id="DB09040">
    <property type="generic name" value="Efinaconazole"/>
</dbReference>
<dbReference type="DrugBank" id="DB11633">
    <property type="generic name" value="Isavuconazole"/>
</dbReference>
<dbReference type="DrugBank" id="DB06636">
    <property type="generic name" value="Isavuconazonium"/>
</dbReference>
<dbReference type="DrugBank" id="DB01026">
    <property type="generic name" value="Ketoconazole"/>
</dbReference>
<dbReference type="DrugBank" id="DB06820">
    <property type="generic name" value="Sulconazole"/>
</dbReference>
<dbReference type="EnsemblFungi" id="CAGL0E04334g-T">
    <property type="protein sequence ID" value="CAGL0E04334g-T-p1"/>
    <property type="gene ID" value="CAGL0E04334g"/>
</dbReference>
<dbReference type="GeneID" id="2887532"/>
<dbReference type="KEGG" id="cgr:2887532"/>
<dbReference type="CGD" id="CAL0128884">
    <property type="gene designation" value="ERG11"/>
</dbReference>
<dbReference type="VEuPathDB" id="FungiDB:B1J91_E04334g"/>
<dbReference type="VEuPathDB" id="FungiDB:CAGL0E04334g"/>
<dbReference type="eggNOG" id="KOG0684">
    <property type="taxonomic scope" value="Eukaryota"/>
</dbReference>
<dbReference type="HOGENOM" id="CLU_001570_15_0_1"/>
<dbReference type="InParanoid" id="P50859"/>
<dbReference type="OMA" id="HWFPFVG"/>
<dbReference type="UniPathway" id="UPA00770">
    <property type="reaction ID" value="UER00754"/>
</dbReference>
<dbReference type="Proteomes" id="UP000002428">
    <property type="component" value="Chromosome E"/>
</dbReference>
<dbReference type="GO" id="GO:0032541">
    <property type="term" value="C:cortical endoplasmic reticulum"/>
    <property type="evidence" value="ECO:0007669"/>
    <property type="project" value="EnsemblFungi"/>
</dbReference>
<dbReference type="GO" id="GO:0016020">
    <property type="term" value="C:membrane"/>
    <property type="evidence" value="ECO:0007669"/>
    <property type="project" value="UniProtKB-SubCell"/>
</dbReference>
<dbReference type="GO" id="GO:0097038">
    <property type="term" value="C:perinuclear endoplasmic reticulum"/>
    <property type="evidence" value="ECO:0007669"/>
    <property type="project" value="EnsemblFungi"/>
</dbReference>
<dbReference type="GO" id="GO:0020037">
    <property type="term" value="F:heme binding"/>
    <property type="evidence" value="ECO:0007669"/>
    <property type="project" value="InterPro"/>
</dbReference>
<dbReference type="GO" id="GO:0005506">
    <property type="term" value="F:iron ion binding"/>
    <property type="evidence" value="ECO:0007669"/>
    <property type="project" value="InterPro"/>
</dbReference>
<dbReference type="GO" id="GO:0008398">
    <property type="term" value="F:sterol 14-demethylase activity"/>
    <property type="evidence" value="ECO:0007669"/>
    <property type="project" value="UniProtKB-EC"/>
</dbReference>
<dbReference type="GO" id="GO:0006696">
    <property type="term" value="P:ergosterol biosynthetic process"/>
    <property type="evidence" value="ECO:0000315"/>
    <property type="project" value="CGD"/>
</dbReference>
<dbReference type="CDD" id="cd11042">
    <property type="entry name" value="CYP51-like"/>
    <property type="match status" value="1"/>
</dbReference>
<dbReference type="FunFam" id="1.10.630.10:FF:000033">
    <property type="entry name" value="14-alpha sterol demethylase"/>
    <property type="match status" value="1"/>
</dbReference>
<dbReference type="Gene3D" id="1.10.630.10">
    <property type="entry name" value="Cytochrome P450"/>
    <property type="match status" value="1"/>
</dbReference>
<dbReference type="InterPro" id="IPR050529">
    <property type="entry name" value="CYP450_sterol_14alpha_dmase"/>
</dbReference>
<dbReference type="InterPro" id="IPR001128">
    <property type="entry name" value="Cyt_P450"/>
</dbReference>
<dbReference type="InterPro" id="IPR017972">
    <property type="entry name" value="Cyt_P450_CS"/>
</dbReference>
<dbReference type="InterPro" id="IPR002403">
    <property type="entry name" value="Cyt_P450_E_grp-IV"/>
</dbReference>
<dbReference type="InterPro" id="IPR036396">
    <property type="entry name" value="Cyt_P450_sf"/>
</dbReference>
<dbReference type="PANTHER" id="PTHR24304:SF2">
    <property type="entry name" value="24-HYDROXYCHOLESTEROL 7-ALPHA-HYDROXYLASE"/>
    <property type="match status" value="1"/>
</dbReference>
<dbReference type="PANTHER" id="PTHR24304">
    <property type="entry name" value="CYTOCHROME P450 FAMILY 7"/>
    <property type="match status" value="1"/>
</dbReference>
<dbReference type="Pfam" id="PF00067">
    <property type="entry name" value="p450"/>
    <property type="match status" value="1"/>
</dbReference>
<dbReference type="PRINTS" id="PR00465">
    <property type="entry name" value="EP450IV"/>
</dbReference>
<dbReference type="PRINTS" id="PR00385">
    <property type="entry name" value="P450"/>
</dbReference>
<dbReference type="SUPFAM" id="SSF48264">
    <property type="entry name" value="Cytochrome P450"/>
    <property type="match status" value="1"/>
</dbReference>
<dbReference type="PROSITE" id="PS00086">
    <property type="entry name" value="CYTOCHROME_P450"/>
    <property type="match status" value="1"/>
</dbReference>
<gene>
    <name type="primary">ERG11</name>
    <name type="synonym">CYP51</name>
    <name type="ordered locus">CAGL0E04334g</name>
</gene>
<name>CP51_CANGA</name>
<reference key="1">
    <citation type="journal article" date="1995" name="Antimicrob. Agents Chemother.">
        <title>Deletion of the Candida glabrata ERG3 and ERG11 genes: effect on cell viability, cell growth, sterol composition, and antifungal susceptibility.</title>
        <authorList>
            <person name="Geber A."/>
            <person name="Hitchcock C.A."/>
            <person name="Swartz J.E."/>
            <person name="Pullen F.S."/>
            <person name="Marsden K.E."/>
            <person name="Kwon-Chung K.J."/>
            <person name="Bennett J.E."/>
        </authorList>
    </citation>
    <scope>NUCLEOTIDE SEQUENCE [GENOMIC DNA]</scope>
    <scope>FUNCTION</scope>
    <source>
        <strain>2001-L5</strain>
    </source>
</reference>
<reference key="2">
    <citation type="journal article" date="2004" name="Nature">
        <title>Genome evolution in yeasts.</title>
        <authorList>
            <person name="Dujon B."/>
            <person name="Sherman D."/>
            <person name="Fischer G."/>
            <person name="Durrens P."/>
            <person name="Casaregola S."/>
            <person name="Lafontaine I."/>
            <person name="de Montigny J."/>
            <person name="Marck C."/>
            <person name="Neuveglise C."/>
            <person name="Talla E."/>
            <person name="Goffard N."/>
            <person name="Frangeul L."/>
            <person name="Aigle M."/>
            <person name="Anthouard V."/>
            <person name="Babour A."/>
            <person name="Barbe V."/>
            <person name="Barnay S."/>
            <person name="Blanchin S."/>
            <person name="Beckerich J.-M."/>
            <person name="Beyne E."/>
            <person name="Bleykasten C."/>
            <person name="Boisrame A."/>
            <person name="Boyer J."/>
            <person name="Cattolico L."/>
            <person name="Confanioleri F."/>
            <person name="de Daruvar A."/>
            <person name="Despons L."/>
            <person name="Fabre E."/>
            <person name="Fairhead C."/>
            <person name="Ferry-Dumazet H."/>
            <person name="Groppi A."/>
            <person name="Hantraye F."/>
            <person name="Hennequin C."/>
            <person name="Jauniaux N."/>
            <person name="Joyet P."/>
            <person name="Kachouri R."/>
            <person name="Kerrest A."/>
            <person name="Koszul R."/>
            <person name="Lemaire M."/>
            <person name="Lesur I."/>
            <person name="Ma L."/>
            <person name="Muller H."/>
            <person name="Nicaud J.-M."/>
            <person name="Nikolski M."/>
            <person name="Oztas S."/>
            <person name="Ozier-Kalogeropoulos O."/>
            <person name="Pellenz S."/>
            <person name="Potier S."/>
            <person name="Richard G.-F."/>
            <person name="Straub M.-L."/>
            <person name="Suleau A."/>
            <person name="Swennen D."/>
            <person name="Tekaia F."/>
            <person name="Wesolowski-Louvel M."/>
            <person name="Westhof E."/>
            <person name="Wirth B."/>
            <person name="Zeniou-Meyer M."/>
            <person name="Zivanovic Y."/>
            <person name="Bolotin-Fukuhara M."/>
            <person name="Thierry A."/>
            <person name="Bouchier C."/>
            <person name="Caudron B."/>
            <person name="Scarpelli C."/>
            <person name="Gaillardin C."/>
            <person name="Weissenbach J."/>
            <person name="Wincker P."/>
            <person name="Souciet J.-L."/>
        </authorList>
    </citation>
    <scope>NUCLEOTIDE SEQUENCE [LARGE SCALE GENOMIC DNA]</scope>
    <source>
        <strain>ATCC 2001 / BCRC 20586 / JCM 3761 / NBRC 0622 / NRRL Y-65 / CBS 138</strain>
    </source>
</reference>
<reference key="3">
    <citation type="journal article" date="1994" name="J. Clin. Microbiol.">
        <title>Rapid detection and identification of Candida albicans and Torulopsis (Candida) glabrata in clinical specimens by species-specific nested PCR amplification of a cytochrome P-450 lanosterol-alpha-demethylase (L1A1) gene fragment.</title>
        <authorList>
            <person name="Burgener-Kairuz P."/>
            <person name="Zuber J.P."/>
            <person name="Jaunin P."/>
            <person name="Buchman T.G."/>
            <person name="Bille J."/>
            <person name="Rossier M."/>
        </authorList>
    </citation>
    <scope>NUCLEOTIDE SEQUENCE [GENOMIC DNA] OF 60-473</scope>
    <source>
        <strain>ATCC 2001 / BCRC 20586 / JCM 3761 / NBRC 0622 / NRRL Y-65 / CBS 138</strain>
    </source>
</reference>
<comment type="function">
    <text evidence="2 3 4">Sterol 14alpha-demethylase that plays a critical role in the third module of ergosterol biosynthesis pathway, being ergosterol the major sterol component in fungal membranes that participates in a variety of functions (By similarity). The third module or late pathway involves the ergosterol synthesis itself through consecutive reactions that mainly occur in the endoplasmic reticulum (ER) membrane (By similarity). In filamentous fungi, during the initial step of this module, lanosterol (lanosta-8,24-dien-3beta-ol) can be metabolized to eburicol (By similarity). Sterol 14alpha-demethylase catalyzes the three-step oxidative removal of the 14alpha-methyl group (C-32) of both these sterols in the form of formate, and converts eburicol and lanosterol to 14-demethyleburicol (4,4,24-trimethylergosta-8,14,24(28)-trienol) and 4,4-dimethyl-5alpha-cholesta-8,14,24-trien-3beta-ol, respectively, which are further metabolized by other enzymes in the pathway to ergosterol (By similarity). Can also use substrates not intrinsic to fungi, such as 24,25-dihydrolanosterol (DHL), producing 4,4-dimethyl-8,14-cholestadien-3-beta-ol, but at lower rates than the endogenous substrates (By similarity).</text>
</comment>
<comment type="catalytic activity">
    <reaction evidence="3">
        <text>a 14alpha-methyl steroid + 3 reduced [NADPH--hemoprotein reductase] + 3 O2 = a Delta(14) steroid + formate + 3 oxidized [NADPH--hemoprotein reductase] + 4 H2O + 4 H(+)</text>
        <dbReference type="Rhea" id="RHEA:54028"/>
        <dbReference type="Rhea" id="RHEA-COMP:11964"/>
        <dbReference type="Rhea" id="RHEA-COMP:11965"/>
        <dbReference type="ChEBI" id="CHEBI:15377"/>
        <dbReference type="ChEBI" id="CHEBI:15378"/>
        <dbReference type="ChEBI" id="CHEBI:15379"/>
        <dbReference type="ChEBI" id="CHEBI:15740"/>
        <dbReference type="ChEBI" id="CHEBI:57618"/>
        <dbReference type="ChEBI" id="CHEBI:58210"/>
        <dbReference type="ChEBI" id="CHEBI:138029"/>
        <dbReference type="ChEBI" id="CHEBI:138031"/>
        <dbReference type="EC" id="1.14.14.154"/>
    </reaction>
    <physiologicalReaction direction="left-to-right" evidence="3">
        <dbReference type="Rhea" id="RHEA:54029"/>
    </physiologicalReaction>
</comment>
<comment type="catalytic activity">
    <reaction evidence="3">
        <text>a 14alpha-methyl steroid + reduced [NADPH--hemoprotein reductase] + O2 = a 14alpha-hydroxymethyl steroid + oxidized [NADPH--hemoprotein reductase] + H2O + H(+)</text>
        <dbReference type="Rhea" id="RHEA:68060"/>
        <dbReference type="Rhea" id="RHEA-COMP:11964"/>
        <dbReference type="Rhea" id="RHEA-COMP:11965"/>
        <dbReference type="ChEBI" id="CHEBI:15377"/>
        <dbReference type="ChEBI" id="CHEBI:15378"/>
        <dbReference type="ChEBI" id="CHEBI:15379"/>
        <dbReference type="ChEBI" id="CHEBI:57618"/>
        <dbReference type="ChEBI" id="CHEBI:58210"/>
        <dbReference type="ChEBI" id="CHEBI:138029"/>
        <dbReference type="ChEBI" id="CHEBI:176901"/>
    </reaction>
    <physiologicalReaction direction="left-to-right" evidence="3">
        <dbReference type="Rhea" id="RHEA:68061"/>
    </physiologicalReaction>
</comment>
<comment type="catalytic activity">
    <reaction evidence="3">
        <text>a 14alpha-hydroxymethyl steroid + reduced [NADPH--hemoprotein reductase] + O2 = a 14alpha-formyl steroid + oxidized [NADPH--hemoprotein reductase] + 2 H2O + H(+)</text>
        <dbReference type="Rhea" id="RHEA:68064"/>
        <dbReference type="Rhea" id="RHEA-COMP:11964"/>
        <dbReference type="Rhea" id="RHEA-COMP:11965"/>
        <dbReference type="ChEBI" id="CHEBI:15377"/>
        <dbReference type="ChEBI" id="CHEBI:15378"/>
        <dbReference type="ChEBI" id="CHEBI:15379"/>
        <dbReference type="ChEBI" id="CHEBI:57618"/>
        <dbReference type="ChEBI" id="CHEBI:58210"/>
        <dbReference type="ChEBI" id="CHEBI:176901"/>
        <dbReference type="ChEBI" id="CHEBI:176902"/>
    </reaction>
    <physiologicalReaction direction="left-to-right" evidence="3">
        <dbReference type="Rhea" id="RHEA:68065"/>
    </physiologicalReaction>
</comment>
<comment type="catalytic activity">
    <reaction evidence="3">
        <text>a 14alpha-formyl steroid + reduced [NADPH--hemoprotein reductase] + O2 = a Delta(14) steroid + formate + oxidized [NADPH--hemoprotein reductase] + H2O + 2 H(+)</text>
        <dbReference type="Rhea" id="RHEA:68068"/>
        <dbReference type="Rhea" id="RHEA-COMP:11964"/>
        <dbReference type="Rhea" id="RHEA-COMP:11965"/>
        <dbReference type="ChEBI" id="CHEBI:15377"/>
        <dbReference type="ChEBI" id="CHEBI:15378"/>
        <dbReference type="ChEBI" id="CHEBI:15379"/>
        <dbReference type="ChEBI" id="CHEBI:15740"/>
        <dbReference type="ChEBI" id="CHEBI:57618"/>
        <dbReference type="ChEBI" id="CHEBI:58210"/>
        <dbReference type="ChEBI" id="CHEBI:138031"/>
        <dbReference type="ChEBI" id="CHEBI:176902"/>
    </reaction>
    <physiologicalReaction direction="left-to-right" evidence="3">
        <dbReference type="Rhea" id="RHEA:68069"/>
    </physiologicalReaction>
</comment>
<comment type="catalytic activity">
    <reaction evidence="3">
        <text>lanosterol + 3 reduced [NADPH--hemoprotein reductase] + 3 O2 = 4,4-dimethyl-5alpha-cholesta-8,14,24-trien-3beta-ol + formate + 3 oxidized [NADPH--hemoprotein reductase] + 4 H2O + 4 H(+)</text>
        <dbReference type="Rhea" id="RHEA:25286"/>
        <dbReference type="Rhea" id="RHEA-COMP:11964"/>
        <dbReference type="Rhea" id="RHEA-COMP:11965"/>
        <dbReference type="ChEBI" id="CHEBI:15377"/>
        <dbReference type="ChEBI" id="CHEBI:15378"/>
        <dbReference type="ChEBI" id="CHEBI:15379"/>
        <dbReference type="ChEBI" id="CHEBI:15740"/>
        <dbReference type="ChEBI" id="CHEBI:16521"/>
        <dbReference type="ChEBI" id="CHEBI:17813"/>
        <dbReference type="ChEBI" id="CHEBI:57618"/>
        <dbReference type="ChEBI" id="CHEBI:58210"/>
        <dbReference type="EC" id="1.14.14.154"/>
    </reaction>
    <physiologicalReaction direction="left-to-right" evidence="3">
        <dbReference type="Rhea" id="RHEA:25287"/>
    </physiologicalReaction>
</comment>
<comment type="catalytic activity">
    <reaction evidence="3">
        <text>lanosterol + reduced [NADPH--hemoprotein reductase] + O2 = 32-hydroxylanosterol + oxidized [NADPH--hemoprotein reductase] + H2O + H(+)</text>
        <dbReference type="Rhea" id="RHEA:75103"/>
        <dbReference type="Rhea" id="RHEA-COMP:11964"/>
        <dbReference type="Rhea" id="RHEA-COMP:11965"/>
        <dbReference type="ChEBI" id="CHEBI:15377"/>
        <dbReference type="ChEBI" id="CHEBI:15378"/>
        <dbReference type="ChEBI" id="CHEBI:15379"/>
        <dbReference type="ChEBI" id="CHEBI:16521"/>
        <dbReference type="ChEBI" id="CHEBI:57618"/>
        <dbReference type="ChEBI" id="CHEBI:58210"/>
        <dbReference type="ChEBI" id="CHEBI:166806"/>
    </reaction>
    <physiologicalReaction direction="left-to-right" evidence="3">
        <dbReference type="Rhea" id="RHEA:75104"/>
    </physiologicalReaction>
</comment>
<comment type="catalytic activity">
    <reaction evidence="3">
        <text>32-hydroxylanosterol + reduced [NADPH--hemoprotein reductase] + O2 = 32-oxolanosterol + oxidized [NADPH--hemoprotein reductase] + 2 H2O + H(+)</text>
        <dbReference type="Rhea" id="RHEA:75107"/>
        <dbReference type="Rhea" id="RHEA-COMP:11964"/>
        <dbReference type="Rhea" id="RHEA-COMP:11965"/>
        <dbReference type="ChEBI" id="CHEBI:15377"/>
        <dbReference type="ChEBI" id="CHEBI:15378"/>
        <dbReference type="ChEBI" id="CHEBI:15379"/>
        <dbReference type="ChEBI" id="CHEBI:57618"/>
        <dbReference type="ChEBI" id="CHEBI:58210"/>
        <dbReference type="ChEBI" id="CHEBI:166681"/>
        <dbReference type="ChEBI" id="CHEBI:166806"/>
    </reaction>
    <physiologicalReaction direction="left-to-right" evidence="3">
        <dbReference type="Rhea" id="RHEA:75108"/>
    </physiologicalReaction>
</comment>
<comment type="catalytic activity">
    <reaction evidence="3">
        <text>32-oxolanosterol + reduced [NADPH--hemoprotein reductase] + O2 = 4,4-dimethyl-5alpha-cholesta-8,14,24-trien-3beta-ol + formate + oxidized [NADPH--hemoprotein reductase] + H2O + 2 H(+)</text>
        <dbReference type="Rhea" id="RHEA:75111"/>
        <dbReference type="Rhea" id="RHEA-COMP:11964"/>
        <dbReference type="Rhea" id="RHEA-COMP:11965"/>
        <dbReference type="ChEBI" id="CHEBI:15377"/>
        <dbReference type="ChEBI" id="CHEBI:15378"/>
        <dbReference type="ChEBI" id="CHEBI:15379"/>
        <dbReference type="ChEBI" id="CHEBI:15740"/>
        <dbReference type="ChEBI" id="CHEBI:17813"/>
        <dbReference type="ChEBI" id="CHEBI:57618"/>
        <dbReference type="ChEBI" id="CHEBI:58210"/>
        <dbReference type="ChEBI" id="CHEBI:166681"/>
    </reaction>
    <physiologicalReaction direction="left-to-right" evidence="3">
        <dbReference type="Rhea" id="RHEA:75112"/>
    </physiologicalReaction>
</comment>
<comment type="catalytic activity">
    <reaction evidence="2">
        <text>eburicol + 3 reduced [NADPH--hemoprotein reductase] + 3 O2 = 14-demethyleburicol + formate + 3 oxidized [NADPH--hemoprotein reductase] + 4 H2O + 4 H(+)</text>
        <dbReference type="Rhea" id="RHEA:75439"/>
        <dbReference type="Rhea" id="RHEA-COMP:11964"/>
        <dbReference type="Rhea" id="RHEA-COMP:11965"/>
        <dbReference type="ChEBI" id="CHEBI:15377"/>
        <dbReference type="ChEBI" id="CHEBI:15378"/>
        <dbReference type="ChEBI" id="CHEBI:15379"/>
        <dbReference type="ChEBI" id="CHEBI:15740"/>
        <dbReference type="ChEBI" id="CHEBI:57618"/>
        <dbReference type="ChEBI" id="CHEBI:58210"/>
        <dbReference type="ChEBI" id="CHEBI:70315"/>
        <dbReference type="ChEBI" id="CHEBI:194330"/>
    </reaction>
    <physiologicalReaction direction="left-to-right" evidence="2">
        <dbReference type="Rhea" id="RHEA:75440"/>
    </physiologicalReaction>
</comment>
<comment type="catalytic activity">
    <reaction evidence="3">
        <text>eburicol + reduced [NADPH--hemoprotein reductase] + O2 = 32-hydroxyeburicol + oxidized [NADPH--hemoprotein reductase] + H2O + H(+)</text>
        <dbReference type="Rhea" id="RHEA:75427"/>
        <dbReference type="Rhea" id="RHEA-COMP:11964"/>
        <dbReference type="Rhea" id="RHEA-COMP:11965"/>
        <dbReference type="ChEBI" id="CHEBI:15377"/>
        <dbReference type="ChEBI" id="CHEBI:15378"/>
        <dbReference type="ChEBI" id="CHEBI:15379"/>
        <dbReference type="ChEBI" id="CHEBI:57618"/>
        <dbReference type="ChEBI" id="CHEBI:58210"/>
        <dbReference type="ChEBI" id="CHEBI:70315"/>
        <dbReference type="ChEBI" id="CHEBI:194328"/>
    </reaction>
    <physiologicalReaction direction="left-to-right" evidence="3">
        <dbReference type="Rhea" id="RHEA:75428"/>
    </physiologicalReaction>
</comment>
<comment type="catalytic activity">
    <reaction evidence="3">
        <text>32-hydroxyeburicol + reduced [NADPH--hemoprotein reductase] + O2 = 32-oxoeburicol + oxidized [NADPH--hemoprotein reductase] + 2 H2O + H(+)</text>
        <dbReference type="Rhea" id="RHEA:75431"/>
        <dbReference type="Rhea" id="RHEA-COMP:11964"/>
        <dbReference type="Rhea" id="RHEA-COMP:11965"/>
        <dbReference type="ChEBI" id="CHEBI:15377"/>
        <dbReference type="ChEBI" id="CHEBI:15378"/>
        <dbReference type="ChEBI" id="CHEBI:15379"/>
        <dbReference type="ChEBI" id="CHEBI:57618"/>
        <dbReference type="ChEBI" id="CHEBI:58210"/>
        <dbReference type="ChEBI" id="CHEBI:194328"/>
        <dbReference type="ChEBI" id="CHEBI:194329"/>
    </reaction>
    <physiologicalReaction direction="left-to-right" evidence="3">
        <dbReference type="Rhea" id="RHEA:75432"/>
    </physiologicalReaction>
</comment>
<comment type="catalytic activity">
    <reaction evidence="3">
        <text>32-oxoeburicol + reduced [NADPH--hemoprotein reductase] + O2 = 14-demethyleburicol + formate + oxidized [NADPH--hemoprotein reductase] + H2O + 2 H(+)</text>
        <dbReference type="Rhea" id="RHEA:75435"/>
        <dbReference type="Rhea" id="RHEA-COMP:11964"/>
        <dbReference type="Rhea" id="RHEA-COMP:11965"/>
        <dbReference type="ChEBI" id="CHEBI:15377"/>
        <dbReference type="ChEBI" id="CHEBI:15378"/>
        <dbReference type="ChEBI" id="CHEBI:15379"/>
        <dbReference type="ChEBI" id="CHEBI:15740"/>
        <dbReference type="ChEBI" id="CHEBI:57618"/>
        <dbReference type="ChEBI" id="CHEBI:58210"/>
        <dbReference type="ChEBI" id="CHEBI:194329"/>
        <dbReference type="ChEBI" id="CHEBI:194330"/>
    </reaction>
    <physiologicalReaction direction="left-to-right" evidence="3">
        <dbReference type="Rhea" id="RHEA:75436"/>
    </physiologicalReaction>
</comment>
<comment type="cofactor">
    <cofactor evidence="1">
        <name>heme</name>
        <dbReference type="ChEBI" id="CHEBI:30413"/>
    </cofactor>
</comment>
<comment type="pathway">
    <text>Steroid biosynthesis; zymosterol biosynthesis; zymosterol from lanosterol: step 1/6.</text>
</comment>
<comment type="subcellular location">
    <subcellularLocation>
        <location evidence="5">Membrane</location>
    </subcellularLocation>
</comment>
<comment type="similarity">
    <text evidence="5">Belongs to the cytochrome P450 family.</text>
</comment>
<feature type="chain" id="PRO_0000052004" description="Lanosterol 14-alpha demethylase">
    <location>
        <begin position="1"/>
        <end position="533"/>
    </location>
</feature>
<feature type="binding site" description="axial binding residue" evidence="1">
    <location>
        <position position="472"/>
    </location>
    <ligand>
        <name>heme</name>
        <dbReference type="ChEBI" id="CHEBI:30413"/>
    </ligand>
    <ligandPart>
        <name>Fe</name>
        <dbReference type="ChEBI" id="CHEBI:18248"/>
    </ligandPart>
</feature>
<feature type="sequence conflict" description="In Ref. 3; AAB32679." evidence="5" ref="3">
    <original>I</original>
    <variation>M</variation>
    <location>
        <position position="64"/>
    </location>
</feature>
<feature type="sequence conflict" description="In Ref. 3; AAB32679." evidence="5" ref="3">
    <original>I</original>
    <variation>T</variation>
    <location>
        <position position="473"/>
    </location>
</feature>
<feature type="helix" evidence="6">
    <location>
        <begin position="23"/>
        <end position="25"/>
    </location>
</feature>
<feature type="helix" evidence="6">
    <location>
        <begin position="28"/>
        <end position="50"/>
    </location>
</feature>
<feature type="turn" evidence="6">
    <location>
        <begin position="65"/>
        <end position="67"/>
    </location>
</feature>
<feature type="helix" evidence="6">
    <location>
        <begin position="70"/>
        <end position="75"/>
    </location>
</feature>
<feature type="helix" evidence="6">
    <location>
        <begin position="77"/>
        <end position="88"/>
    </location>
</feature>
<feature type="strand" evidence="6">
    <location>
        <begin position="90"/>
        <end position="96"/>
    </location>
</feature>
<feature type="strand" evidence="6">
    <location>
        <begin position="99"/>
        <end position="104"/>
    </location>
</feature>
<feature type="helix" evidence="6">
    <location>
        <begin position="106"/>
        <end position="114"/>
    </location>
</feature>
<feature type="turn" evidence="6">
    <location>
        <begin position="118"/>
        <end position="120"/>
    </location>
</feature>
<feature type="helix" evidence="6">
    <location>
        <begin position="123"/>
        <end position="135"/>
    </location>
</feature>
<feature type="helix" evidence="6">
    <location>
        <begin position="145"/>
        <end position="156"/>
    </location>
</feature>
<feature type="helix" evidence="6">
    <location>
        <begin position="161"/>
        <end position="181"/>
    </location>
</feature>
<feature type="turn" evidence="6">
    <location>
        <begin position="183"/>
        <end position="185"/>
    </location>
</feature>
<feature type="turn" evidence="6">
    <location>
        <begin position="187"/>
        <end position="189"/>
    </location>
</feature>
<feature type="strand" evidence="6">
    <location>
        <begin position="191"/>
        <end position="196"/>
    </location>
</feature>
<feature type="helix" evidence="6">
    <location>
        <begin position="197"/>
        <end position="213"/>
    </location>
</feature>
<feature type="helix" evidence="6">
    <location>
        <begin position="216"/>
        <end position="221"/>
    </location>
</feature>
<feature type="helix" evidence="6">
    <location>
        <begin position="227"/>
        <end position="235"/>
    </location>
</feature>
<feature type="helix" evidence="6">
    <location>
        <begin position="240"/>
        <end position="243"/>
    </location>
</feature>
<feature type="helix" evidence="6">
    <location>
        <begin position="250"/>
        <end position="276"/>
    </location>
</feature>
<feature type="strand" evidence="6">
    <location>
        <begin position="281"/>
        <end position="283"/>
    </location>
</feature>
<feature type="helix" evidence="6">
    <location>
        <begin position="284"/>
        <end position="290"/>
    </location>
</feature>
<feature type="helix" evidence="6">
    <location>
        <begin position="302"/>
        <end position="332"/>
    </location>
</feature>
<feature type="helix" evidence="6">
    <location>
        <begin position="335"/>
        <end position="348"/>
    </location>
</feature>
<feature type="turn" evidence="6">
    <location>
        <begin position="349"/>
        <end position="353"/>
    </location>
</feature>
<feature type="helix" evidence="6">
    <location>
        <begin position="358"/>
        <end position="362"/>
    </location>
</feature>
<feature type="helix" evidence="6">
    <location>
        <begin position="365"/>
        <end position="377"/>
    </location>
</feature>
<feature type="strand" evidence="6">
    <location>
        <begin position="384"/>
        <end position="388"/>
    </location>
</feature>
<feature type="strand" evidence="6">
    <location>
        <begin position="406"/>
        <end position="409"/>
    </location>
</feature>
<feature type="helix" evidence="6">
    <location>
        <begin position="411"/>
        <end position="415"/>
    </location>
</feature>
<feature type="turn" evidence="6">
    <location>
        <begin position="418"/>
        <end position="420"/>
    </location>
</feature>
<feature type="strand" evidence="6">
    <location>
        <begin position="421"/>
        <end position="423"/>
    </location>
</feature>
<feature type="helix" evidence="6">
    <location>
        <begin position="429"/>
        <end position="432"/>
    </location>
</feature>
<feature type="strand" evidence="6">
    <location>
        <begin position="446"/>
        <end position="451"/>
    </location>
</feature>
<feature type="strand" evidence="6">
    <location>
        <begin position="453"/>
        <end position="456"/>
    </location>
</feature>
<feature type="helix" evidence="6">
    <location>
        <begin position="468"/>
        <end position="470"/>
    </location>
</feature>
<feature type="helix" evidence="6">
    <location>
        <begin position="475"/>
        <end position="492"/>
    </location>
</feature>
<feature type="strand" evidence="6">
    <location>
        <begin position="493"/>
        <end position="496"/>
    </location>
</feature>
<feature type="strand" evidence="6">
    <location>
        <begin position="510"/>
        <end position="513"/>
    </location>
</feature>
<feature type="strand" evidence="6">
    <location>
        <begin position="521"/>
        <end position="527"/>
    </location>
</feature>
<protein>
    <recommendedName>
        <fullName>Lanosterol 14-alpha demethylase</fullName>
        <ecNumber>1.14.14.154</ecNumber>
    </recommendedName>
    <alternativeName>
        <fullName>CYPLI</fullName>
    </alternativeName>
    <alternativeName>
        <fullName>Cytochrome P450 51</fullName>
    </alternativeName>
    <alternativeName>
        <fullName>Cytochrome P450-14DM</fullName>
    </alternativeName>
    <alternativeName>
        <fullName>Cytochrome P450-LIA1</fullName>
    </alternativeName>
    <alternativeName>
        <fullName>Sterol 14-alpha demethylase</fullName>
    </alternativeName>
</protein>
<sequence length="533" mass="61305">MSTENTSLVVELLEYVKLGLSYFQALPLAQRVSIMVALPFVYTITWQLLYSLRKDRPPLVFYWIPWVGSAIPYGTKPYEFFEDCQKKYGDIFSFMLLGRIMTVYLGPKGHEFIFNAKLADVSAEAAYSHLTTPVFGKGVIYDCPNHRLMEQKKFVKGALTKEAFVRYVPLIAEEIYKYFRNSKNFKINENNSGIVDVMVSQPEMTIFTASRSLLGKEMRDKLDTDFAYLYSDLDKGFTPINFVFPNLPLEHYRKRDHAQQAISGTYMSLIKERREKNDIQNRDLIDELMKNSTYKDGTKMTDQEIANLLIGVLMGGQHTSAATSAWCLLHLAERPDVQEELYQEQMRVLNNDTKELTYDDLQNMPLLNQMIKETLRLHHPLHSLFRKVMRDVAIPNTSYVVPRDYHVLVSPGYTHLQEEFFPKPNEFNIHRWDGDAASSSAAGGDEVDYGFGAISKGVSSPYLPFGGGRHRCIGELFAYCQLGVLMSIFIRTMKWRYPTEGETVPPSDFTSMVTLPTAPAKIYWEKRHPEQKY</sequence>
<keyword id="KW-0002">3D-structure</keyword>
<keyword id="KW-0349">Heme</keyword>
<keyword id="KW-0408">Iron</keyword>
<keyword id="KW-0444">Lipid biosynthesis</keyword>
<keyword id="KW-0443">Lipid metabolism</keyword>
<keyword id="KW-0472">Membrane</keyword>
<keyword id="KW-0479">Metal-binding</keyword>
<keyword id="KW-0503">Monooxygenase</keyword>
<keyword id="KW-0560">Oxidoreductase</keyword>
<keyword id="KW-1185">Reference proteome</keyword>
<keyword id="KW-0752">Steroid biosynthesis</keyword>
<keyword id="KW-0753">Steroid metabolism</keyword>
<keyword id="KW-0756">Sterol biosynthesis</keyword>
<keyword id="KW-1207">Sterol metabolism</keyword>
<accession>P50859</accession>
<accession>Q02312</accession>
<evidence type="ECO:0000250" key="1"/>
<evidence type="ECO:0000250" key="2">
    <source>
        <dbReference type="UniProtKB" id="P10613"/>
    </source>
</evidence>
<evidence type="ECO:0000250" key="3">
    <source>
        <dbReference type="UniProtKB" id="P10614"/>
    </source>
</evidence>
<evidence type="ECO:0000250" key="4">
    <source>
        <dbReference type="UniProtKB" id="Q4WNT5"/>
    </source>
</evidence>
<evidence type="ECO:0000305" key="5"/>
<evidence type="ECO:0007829" key="6">
    <source>
        <dbReference type="PDB" id="5JLC"/>
    </source>
</evidence>
<proteinExistence type="evidence at protein level"/>
<organism>
    <name type="scientific">Candida glabrata (strain ATCC 2001 / BCRC 20586 / JCM 3761 / NBRC 0622 / NRRL Y-65 / CBS 138)</name>
    <name type="common">Yeast</name>
    <name type="synonym">Nakaseomyces glabratus</name>
    <dbReference type="NCBI Taxonomy" id="284593"/>
    <lineage>
        <taxon>Eukaryota</taxon>
        <taxon>Fungi</taxon>
        <taxon>Dikarya</taxon>
        <taxon>Ascomycota</taxon>
        <taxon>Saccharomycotina</taxon>
        <taxon>Saccharomycetes</taxon>
        <taxon>Saccharomycetales</taxon>
        <taxon>Saccharomycetaceae</taxon>
        <taxon>Nakaseomyces</taxon>
    </lineage>
</organism>